<dbReference type="EC" id="2.7.1.68" evidence="10 11 12 13"/>
<dbReference type="EMBL" id="D86176">
    <property type="protein sequence ID" value="BAA13030.1"/>
    <property type="molecule type" value="mRNA"/>
</dbReference>
<dbReference type="EMBL" id="AF048695">
    <property type="protein sequence ID" value="AAC05374.1"/>
    <property type="molecule type" value="mRNA"/>
</dbReference>
<dbReference type="EMBL" id="AK149354">
    <property type="protein sequence ID" value="BAE28830.1"/>
    <property type="molecule type" value="mRNA"/>
</dbReference>
<dbReference type="EMBL" id="AK164552">
    <property type="protein sequence ID" value="BAE37836.1"/>
    <property type="molecule type" value="mRNA"/>
</dbReference>
<dbReference type="EMBL" id="AK146100">
    <property type="protein sequence ID" value="BAE26901.1"/>
    <property type="molecule type" value="mRNA"/>
</dbReference>
<dbReference type="EMBL" id="BC034864">
    <property type="protein sequence ID" value="AAH34864.1"/>
    <property type="molecule type" value="mRNA"/>
</dbReference>
<dbReference type="CCDS" id="CCDS37940.1">
    <molecule id="P70181-1"/>
</dbReference>
<dbReference type="RefSeq" id="NP_032872.1">
    <molecule id="P70181-1"/>
    <property type="nucleotide sequence ID" value="NM_008846.3"/>
</dbReference>
<dbReference type="RefSeq" id="XP_006526826.1">
    <molecule id="P70181-1"/>
    <property type="nucleotide sequence ID" value="XM_006526763.5"/>
</dbReference>
<dbReference type="SMR" id="P70181"/>
<dbReference type="BioGRID" id="202171">
    <property type="interactions" value="2"/>
</dbReference>
<dbReference type="FunCoup" id="P70181">
    <property type="interactions" value="887"/>
</dbReference>
<dbReference type="IntAct" id="P70181">
    <property type="interactions" value="3"/>
</dbReference>
<dbReference type="STRING" id="10090.ENSMUSP00000025800"/>
<dbReference type="BindingDB" id="P70181"/>
<dbReference type="SwissLipids" id="SLP:000000549"/>
<dbReference type="iPTMnet" id="P70181"/>
<dbReference type="PhosphoSitePlus" id="P70181"/>
<dbReference type="jPOST" id="P70181"/>
<dbReference type="PaxDb" id="10090-ENSMUSP00000025800"/>
<dbReference type="PeptideAtlas" id="P70181"/>
<dbReference type="ProteomicsDB" id="301819">
    <molecule id="P70181-1"/>
</dbReference>
<dbReference type="ProteomicsDB" id="301820">
    <molecule id="P70181-2"/>
</dbReference>
<dbReference type="Antibodypedia" id="2767">
    <property type="antibodies" value="155 antibodies from 28 providers"/>
</dbReference>
<dbReference type="DNASU" id="18719"/>
<dbReference type="Ensembl" id="ENSMUST00000025800.15">
    <molecule id="P70181-1"/>
    <property type="protein sequence ID" value="ENSMUSP00000025800.9"/>
    <property type="gene ID" value="ENSMUSG00000024867.15"/>
</dbReference>
<dbReference type="Ensembl" id="ENSMUST00000112673.9">
    <molecule id="P70181-2"/>
    <property type="protein sequence ID" value="ENSMUSP00000108292.3"/>
    <property type="gene ID" value="ENSMUSG00000024867.15"/>
</dbReference>
<dbReference type="GeneID" id="18719"/>
<dbReference type="KEGG" id="mmu:18719"/>
<dbReference type="UCSC" id="uc008hap.1">
    <molecule id="P70181-1"/>
    <property type="organism name" value="mouse"/>
</dbReference>
<dbReference type="UCSC" id="uc012bjs.1">
    <molecule id="P70181-2"/>
    <property type="organism name" value="mouse"/>
</dbReference>
<dbReference type="AGR" id="MGI:107930"/>
<dbReference type="CTD" id="8395"/>
<dbReference type="MGI" id="MGI:107930">
    <property type="gene designation" value="Pip5k1b"/>
</dbReference>
<dbReference type="VEuPathDB" id="HostDB:ENSMUSG00000024867"/>
<dbReference type="eggNOG" id="KOG0229">
    <property type="taxonomic scope" value="Eukaryota"/>
</dbReference>
<dbReference type="GeneTree" id="ENSGT00940000156639"/>
<dbReference type="HOGENOM" id="CLU_004312_5_1_1"/>
<dbReference type="InParanoid" id="P70181"/>
<dbReference type="OMA" id="NSNMKER"/>
<dbReference type="OrthoDB" id="70770at2759"/>
<dbReference type="PhylomeDB" id="P70181"/>
<dbReference type="TreeFam" id="TF319618"/>
<dbReference type="BRENDA" id="2.7.1.68">
    <property type="organism ID" value="3474"/>
</dbReference>
<dbReference type="Reactome" id="R-MMU-1660499">
    <property type="pathway name" value="Synthesis of PIPs at the plasma membrane"/>
</dbReference>
<dbReference type="Reactome" id="R-MMU-201688">
    <property type="pathway name" value="WNT mediated activation of DVL"/>
</dbReference>
<dbReference type="Reactome" id="R-MMU-6811558">
    <property type="pathway name" value="PI5P, PP2A and IER3 Regulate PI3K/AKT Signaling"/>
</dbReference>
<dbReference type="SABIO-RK" id="P70181"/>
<dbReference type="BioGRID-ORCS" id="18719">
    <property type="hits" value="2 hits in 62 CRISPR screens"/>
</dbReference>
<dbReference type="ChiTaRS" id="Pip5k1b">
    <property type="organism name" value="mouse"/>
</dbReference>
<dbReference type="PRO" id="PR:P70181"/>
<dbReference type="Proteomes" id="UP000000589">
    <property type="component" value="Chromosome 19"/>
</dbReference>
<dbReference type="RNAct" id="P70181">
    <property type="molecule type" value="protein"/>
</dbReference>
<dbReference type="Bgee" id="ENSMUSG00000024867">
    <property type="expression patterns" value="Expressed in choroid plexus of fourth ventricle and 208 other cell types or tissues"/>
</dbReference>
<dbReference type="GO" id="GO:0005829">
    <property type="term" value="C:cytosol"/>
    <property type="evidence" value="ECO:0000314"/>
    <property type="project" value="MGI"/>
</dbReference>
<dbReference type="GO" id="GO:0012505">
    <property type="term" value="C:endomembrane system"/>
    <property type="evidence" value="ECO:0007669"/>
    <property type="project" value="UniProtKB-SubCell"/>
</dbReference>
<dbReference type="GO" id="GO:0005886">
    <property type="term" value="C:plasma membrane"/>
    <property type="evidence" value="ECO:0007669"/>
    <property type="project" value="UniProtKB-SubCell"/>
</dbReference>
<dbReference type="GO" id="GO:0001931">
    <property type="term" value="C:uropod"/>
    <property type="evidence" value="ECO:0007669"/>
    <property type="project" value="Ensembl"/>
</dbReference>
<dbReference type="GO" id="GO:0016308">
    <property type="term" value="F:1-phosphatidylinositol-4-phosphate 5-kinase activity"/>
    <property type="evidence" value="ECO:0000314"/>
    <property type="project" value="UniProtKB"/>
</dbReference>
<dbReference type="GO" id="GO:0005524">
    <property type="term" value="F:ATP binding"/>
    <property type="evidence" value="ECO:0007669"/>
    <property type="project" value="UniProtKB-KW"/>
</dbReference>
<dbReference type="GO" id="GO:0006661">
    <property type="term" value="P:phosphatidylinositol biosynthetic process"/>
    <property type="evidence" value="ECO:0000316"/>
    <property type="project" value="MGI"/>
</dbReference>
<dbReference type="GO" id="GO:0046488">
    <property type="term" value="P:phosphatidylinositol metabolic process"/>
    <property type="evidence" value="ECO:0000314"/>
    <property type="project" value="MGI"/>
</dbReference>
<dbReference type="CDD" id="cd17307">
    <property type="entry name" value="PIPKc_PIP5K1B"/>
    <property type="match status" value="1"/>
</dbReference>
<dbReference type="FunFam" id="3.30.800.10:FF:000001">
    <property type="entry name" value="phosphatidylinositol 4-phosphate 5-kinase type-1 gamma"/>
    <property type="match status" value="1"/>
</dbReference>
<dbReference type="Gene3D" id="3.30.810.10">
    <property type="entry name" value="2-Layer Sandwich"/>
    <property type="match status" value="1"/>
</dbReference>
<dbReference type="Gene3D" id="3.30.800.10">
    <property type="entry name" value="Phosphatidylinositol Phosphate Kinase II Beta"/>
    <property type="match status" value="1"/>
</dbReference>
<dbReference type="InterPro" id="IPR027483">
    <property type="entry name" value="PInositol-4-P-4/5-kinase_C_sf"/>
</dbReference>
<dbReference type="InterPro" id="IPR002498">
    <property type="entry name" value="PInositol-4-P-4/5-kinase_core"/>
</dbReference>
<dbReference type="InterPro" id="IPR027484">
    <property type="entry name" value="PInositol-4-P-5-kinase_N"/>
</dbReference>
<dbReference type="InterPro" id="IPR023610">
    <property type="entry name" value="PInositol-4/5-P-5/4-kinase"/>
</dbReference>
<dbReference type="PANTHER" id="PTHR23086:SF34">
    <property type="entry name" value="PHOSPHATIDYLINOSITOL 4-PHOSPHATE 5-KINASE TYPE-1 BETA"/>
    <property type="match status" value="1"/>
</dbReference>
<dbReference type="PANTHER" id="PTHR23086">
    <property type="entry name" value="PHOSPHATIDYLINOSITOL-4-PHOSPHATE 5-KINASE"/>
    <property type="match status" value="1"/>
</dbReference>
<dbReference type="Pfam" id="PF01504">
    <property type="entry name" value="PIP5K"/>
    <property type="match status" value="1"/>
</dbReference>
<dbReference type="SMART" id="SM00330">
    <property type="entry name" value="PIPKc"/>
    <property type="match status" value="1"/>
</dbReference>
<dbReference type="SUPFAM" id="SSF56104">
    <property type="entry name" value="SAICAR synthase-like"/>
    <property type="match status" value="1"/>
</dbReference>
<dbReference type="PROSITE" id="PS51455">
    <property type="entry name" value="PIPK"/>
    <property type="match status" value="1"/>
</dbReference>
<reference key="1">
    <citation type="journal article" date="1996" name="J. Biol. Chem.">
        <title>Cloning of cDNAs encoding two isoforms of 68-kDa type I phosphatidylinositol 4-phosphate 5-kinase.</title>
        <authorList>
            <person name="Ishihara H."/>
            <person name="Shibasaki Y."/>
            <person name="Kizuki N."/>
            <person name="Katagiri H."/>
            <person name="Yazaki Y."/>
            <person name="Asano T."/>
            <person name="Oka Y."/>
        </authorList>
    </citation>
    <scope>NUCLEOTIDE SEQUENCE [MRNA] (ISOFORM 1)</scope>
    <scope>CATALYTIC ACTIVITY</scope>
    <scope>ACTIVITY REGULATION</scope>
    <scope>TISSUE SPECIFICITY</scope>
    <source>
        <tissue>Insulinoma</tissue>
    </source>
</reference>
<reference key="2">
    <citation type="submission" date="1998-02" db="EMBL/GenBank/DDBJ databases">
        <authorList>
            <person name="Machesky L.M."/>
        </authorList>
    </citation>
    <scope>NUCLEOTIDE SEQUENCE [MRNA] (ISOFORM 1)</scope>
</reference>
<reference key="3">
    <citation type="journal article" date="2005" name="Science">
        <title>The transcriptional landscape of the mammalian genome.</title>
        <authorList>
            <person name="Carninci P."/>
            <person name="Kasukawa T."/>
            <person name="Katayama S."/>
            <person name="Gough J."/>
            <person name="Frith M.C."/>
            <person name="Maeda N."/>
            <person name="Oyama R."/>
            <person name="Ravasi T."/>
            <person name="Lenhard B."/>
            <person name="Wells C."/>
            <person name="Kodzius R."/>
            <person name="Shimokawa K."/>
            <person name="Bajic V.B."/>
            <person name="Brenner S.E."/>
            <person name="Batalov S."/>
            <person name="Forrest A.R."/>
            <person name="Zavolan M."/>
            <person name="Davis M.J."/>
            <person name="Wilming L.G."/>
            <person name="Aidinis V."/>
            <person name="Allen J.E."/>
            <person name="Ambesi-Impiombato A."/>
            <person name="Apweiler R."/>
            <person name="Aturaliya R.N."/>
            <person name="Bailey T.L."/>
            <person name="Bansal M."/>
            <person name="Baxter L."/>
            <person name="Beisel K.W."/>
            <person name="Bersano T."/>
            <person name="Bono H."/>
            <person name="Chalk A.M."/>
            <person name="Chiu K.P."/>
            <person name="Choudhary V."/>
            <person name="Christoffels A."/>
            <person name="Clutterbuck D.R."/>
            <person name="Crowe M.L."/>
            <person name="Dalla E."/>
            <person name="Dalrymple B.P."/>
            <person name="de Bono B."/>
            <person name="Della Gatta G."/>
            <person name="di Bernardo D."/>
            <person name="Down T."/>
            <person name="Engstrom P."/>
            <person name="Fagiolini M."/>
            <person name="Faulkner G."/>
            <person name="Fletcher C.F."/>
            <person name="Fukushima T."/>
            <person name="Furuno M."/>
            <person name="Futaki S."/>
            <person name="Gariboldi M."/>
            <person name="Georgii-Hemming P."/>
            <person name="Gingeras T.R."/>
            <person name="Gojobori T."/>
            <person name="Green R.E."/>
            <person name="Gustincich S."/>
            <person name="Harbers M."/>
            <person name="Hayashi Y."/>
            <person name="Hensch T.K."/>
            <person name="Hirokawa N."/>
            <person name="Hill D."/>
            <person name="Huminiecki L."/>
            <person name="Iacono M."/>
            <person name="Ikeo K."/>
            <person name="Iwama A."/>
            <person name="Ishikawa T."/>
            <person name="Jakt M."/>
            <person name="Kanapin A."/>
            <person name="Katoh M."/>
            <person name="Kawasawa Y."/>
            <person name="Kelso J."/>
            <person name="Kitamura H."/>
            <person name="Kitano H."/>
            <person name="Kollias G."/>
            <person name="Krishnan S.P."/>
            <person name="Kruger A."/>
            <person name="Kummerfeld S.K."/>
            <person name="Kurochkin I.V."/>
            <person name="Lareau L.F."/>
            <person name="Lazarevic D."/>
            <person name="Lipovich L."/>
            <person name="Liu J."/>
            <person name="Liuni S."/>
            <person name="McWilliam S."/>
            <person name="Madan Babu M."/>
            <person name="Madera M."/>
            <person name="Marchionni L."/>
            <person name="Matsuda H."/>
            <person name="Matsuzawa S."/>
            <person name="Miki H."/>
            <person name="Mignone F."/>
            <person name="Miyake S."/>
            <person name="Morris K."/>
            <person name="Mottagui-Tabar S."/>
            <person name="Mulder N."/>
            <person name="Nakano N."/>
            <person name="Nakauchi H."/>
            <person name="Ng P."/>
            <person name="Nilsson R."/>
            <person name="Nishiguchi S."/>
            <person name="Nishikawa S."/>
            <person name="Nori F."/>
            <person name="Ohara O."/>
            <person name="Okazaki Y."/>
            <person name="Orlando V."/>
            <person name="Pang K.C."/>
            <person name="Pavan W.J."/>
            <person name="Pavesi G."/>
            <person name="Pesole G."/>
            <person name="Petrovsky N."/>
            <person name="Piazza S."/>
            <person name="Reed J."/>
            <person name="Reid J.F."/>
            <person name="Ring B.Z."/>
            <person name="Ringwald M."/>
            <person name="Rost B."/>
            <person name="Ruan Y."/>
            <person name="Salzberg S.L."/>
            <person name="Sandelin A."/>
            <person name="Schneider C."/>
            <person name="Schoenbach C."/>
            <person name="Sekiguchi K."/>
            <person name="Semple C.A."/>
            <person name="Seno S."/>
            <person name="Sessa L."/>
            <person name="Sheng Y."/>
            <person name="Shibata Y."/>
            <person name="Shimada H."/>
            <person name="Shimada K."/>
            <person name="Silva D."/>
            <person name="Sinclair B."/>
            <person name="Sperling S."/>
            <person name="Stupka E."/>
            <person name="Sugiura K."/>
            <person name="Sultana R."/>
            <person name="Takenaka Y."/>
            <person name="Taki K."/>
            <person name="Tammoja K."/>
            <person name="Tan S.L."/>
            <person name="Tang S."/>
            <person name="Taylor M.S."/>
            <person name="Tegner J."/>
            <person name="Teichmann S.A."/>
            <person name="Ueda H.R."/>
            <person name="van Nimwegen E."/>
            <person name="Verardo R."/>
            <person name="Wei C.L."/>
            <person name="Yagi K."/>
            <person name="Yamanishi H."/>
            <person name="Zabarovsky E."/>
            <person name="Zhu S."/>
            <person name="Zimmer A."/>
            <person name="Hide W."/>
            <person name="Bult C."/>
            <person name="Grimmond S.M."/>
            <person name="Teasdale R.D."/>
            <person name="Liu E.T."/>
            <person name="Brusic V."/>
            <person name="Quackenbush J."/>
            <person name="Wahlestedt C."/>
            <person name="Mattick J.S."/>
            <person name="Hume D.A."/>
            <person name="Kai C."/>
            <person name="Sasaki D."/>
            <person name="Tomaru Y."/>
            <person name="Fukuda S."/>
            <person name="Kanamori-Katayama M."/>
            <person name="Suzuki M."/>
            <person name="Aoki J."/>
            <person name="Arakawa T."/>
            <person name="Iida J."/>
            <person name="Imamura K."/>
            <person name="Itoh M."/>
            <person name="Kato T."/>
            <person name="Kawaji H."/>
            <person name="Kawagashira N."/>
            <person name="Kawashima T."/>
            <person name="Kojima M."/>
            <person name="Kondo S."/>
            <person name="Konno H."/>
            <person name="Nakano K."/>
            <person name="Ninomiya N."/>
            <person name="Nishio T."/>
            <person name="Okada M."/>
            <person name="Plessy C."/>
            <person name="Shibata K."/>
            <person name="Shiraki T."/>
            <person name="Suzuki S."/>
            <person name="Tagami M."/>
            <person name="Waki K."/>
            <person name="Watahiki A."/>
            <person name="Okamura-Oho Y."/>
            <person name="Suzuki H."/>
            <person name="Kawai J."/>
            <person name="Hayashizaki Y."/>
        </authorList>
    </citation>
    <scope>NUCLEOTIDE SEQUENCE [LARGE SCALE MRNA] (ISOFORM 1)</scope>
    <source>
        <strain>C57BL/6J</strain>
        <tissue>Amnion</tissue>
        <tissue>Heart</tissue>
        <tissue>Retina</tissue>
    </source>
</reference>
<reference key="4">
    <citation type="journal article" date="2004" name="Genome Res.">
        <title>The status, quality, and expansion of the NIH full-length cDNA project: the Mammalian Gene Collection (MGC).</title>
        <authorList>
            <consortium name="The MGC Project Team"/>
        </authorList>
    </citation>
    <scope>NUCLEOTIDE SEQUENCE [LARGE SCALE MRNA] (ISOFORM 2)</scope>
    <source>
        <strain>C57BL/6J</strain>
        <tissue>Thymus</tissue>
    </source>
</reference>
<reference key="5">
    <citation type="journal article" date="1997" name="Nature">
        <title>A new pathway for synthesis of phosphatidylinositol-4,5-bisphosphate.</title>
        <authorList>
            <person name="Rameh L.E."/>
            <person name="Tolias K.F."/>
            <person name="Duckworth B.C."/>
            <person name="Cantley L.C."/>
        </authorList>
    </citation>
    <scope>FUNCTION</scope>
    <scope>CATALYTIC ACTIVITY</scope>
</reference>
<reference key="6">
    <citation type="journal article" date="1998" name="J. Biol. Chem.">
        <title>Type I phosphatidylinositol-4-phosphate 5-kinases. Cloning of the third isoform and deletion/substitution analysis of members of this novel lipid kinase family.</title>
        <authorList>
            <person name="Ishihara H."/>
            <person name="Shibasaki Y."/>
            <person name="Kizuki N."/>
            <person name="Wada T."/>
            <person name="Yazaki Y."/>
            <person name="Asano T."/>
            <person name="Oka Y."/>
        </authorList>
    </citation>
    <scope>FUNCTION</scope>
    <scope>CATALYTIC ACTIVITY</scope>
    <scope>ACTIVITY REGULATION</scope>
    <scope>BIOPHYSICOCHEMICAL PROPERTIES</scope>
    <scope>MUTAGENESIS OF LYS-138</scope>
</reference>
<reference key="7">
    <citation type="journal article" date="2000" name="Curr. Biol.">
        <title>Type Ialpha phosphatidylinositol-4-phosphate 5-kinase mediates Rac-dependent actin assembly.</title>
        <authorList>
            <person name="Tolias K.F."/>
            <person name="Hartwig J.H."/>
            <person name="Ishihara H."/>
            <person name="Shibasaki Y."/>
            <person name="Cantley L.C."/>
            <person name="Carpenter C.L."/>
        </authorList>
    </citation>
    <scope>FUNCTION</scope>
    <scope>INTERACTION WITH RAC1</scope>
    <scope>MUTAGENESIS OF ASP-227</scope>
</reference>
<reference key="8">
    <citation type="journal article" date="2000" name="EMBO J.">
        <title>Interaction of the type Ialpha PIPkinase with phospholipase D: a role for the local generation of phosphatidylinositol 4, 5-bisphosphate in the regulation of PLD2 activity.</title>
        <authorList>
            <person name="Divecha N."/>
            <person name="Roefs M."/>
            <person name="Halstead J.R."/>
            <person name="D'Andrea S."/>
            <person name="Fernandez-Borga M."/>
            <person name="Oomen L."/>
            <person name="Saqib K.M."/>
            <person name="Wakelam M.J.O."/>
            <person name="D'Santos C."/>
        </authorList>
    </citation>
    <scope>FUNCTION</scope>
    <scope>INTERACTION WITH PLD1 AND PLD2</scope>
    <scope>SUBCELLULAR LOCATION</scope>
</reference>
<reference key="9">
    <citation type="journal article" date="2000" name="J. Biol. Chem.">
        <title>Type I phosphatidylinositol 4-phosphate 5-kinase directly interacts with ADP-ribosylation factor 1 and is responsible for phosphatidylinositol 4,5-bisphosphate synthesis in the Golgi compartment.</title>
        <authorList>
            <person name="Jones D.H."/>
            <person name="Morris J.B."/>
            <person name="Morgan C.P."/>
            <person name="Kondo H."/>
            <person name="Irvine R.F."/>
            <person name="Cockcroft S."/>
        </authorList>
    </citation>
    <scope>INTERACTION WITH ARF1</scope>
</reference>
<reference key="10">
    <citation type="journal article" date="2005" name="Mol. Cell. Biol.">
        <title>The LIM protein Ajuba regulates phosphatidylinositol 4,5-bisphosphate levels in migrating cells through an interaction with and activation of PIPKI alpha.</title>
        <authorList>
            <person name="Kisseleva M."/>
            <person name="Feng Y."/>
            <person name="Ward M."/>
            <person name="Song C."/>
            <person name="Anderson R.A."/>
            <person name="Longmore G.D."/>
        </authorList>
    </citation>
    <scope>INTERACTION WITH AJUBA</scope>
</reference>
<reference key="11">
    <citation type="journal article" date="2008" name="Proc. Natl. Acad. Sci. U.S.A.">
        <title>Loss of PIP5KIbeta demonstrates that PIP5KI isoform-specific PIP2 synthesis is required for IP3 formation.</title>
        <authorList>
            <person name="Wang Y."/>
            <person name="Chen X."/>
            <person name="Lian L."/>
            <person name="Tang T."/>
            <person name="Stalker T.J."/>
            <person name="Sasaki T."/>
            <person name="Kanaho Y."/>
            <person name="Brass L.F."/>
            <person name="Choi J.K."/>
            <person name="Hartwig J.H."/>
            <person name="Abrams C.S."/>
        </authorList>
    </citation>
    <scope>FUNCTION IN PLATELETS</scope>
</reference>
<reference key="12">
    <citation type="journal article" date="2010" name="Cell">
        <title>A tissue-specific atlas of mouse protein phosphorylation and expression.</title>
        <authorList>
            <person name="Huttlin E.L."/>
            <person name="Jedrychowski M.P."/>
            <person name="Elias J.E."/>
            <person name="Goswami T."/>
            <person name="Rad R."/>
            <person name="Beausoleil S.A."/>
            <person name="Villen J."/>
            <person name="Haas W."/>
            <person name="Sowa M.E."/>
            <person name="Gygi S.P."/>
        </authorList>
    </citation>
    <scope>PHOSPHORYLATION [LARGE SCALE ANALYSIS] AT SER-445; SER-447 AND SER-448</scope>
    <scope>IDENTIFICATION BY MASS SPECTROMETRY [LARGE SCALE ANALYSIS]</scope>
    <source>
        <tissue>Brain</tissue>
        <tissue>Lung</tissue>
        <tissue>Spleen</tissue>
    </source>
</reference>
<reference key="13">
    <citation type="journal article" date="2012" name="J. Biol. Chem.">
        <title>Phosphatidylinositol-4-phosphate 5-kinase isoforms exhibit acyl chain selectivity for both substrate and lipid activator.</title>
        <authorList>
            <person name="Shulga Y.V."/>
            <person name="Anderson R.A."/>
            <person name="Topham M.K."/>
            <person name="Epand R.M."/>
        </authorList>
    </citation>
    <scope>FUNCTION</scope>
    <scope>CATALYTIC ACTIVITY</scope>
    <scope>BIOPHYSICOCHEMICAL PROPERTIES</scope>
</reference>
<accession>P70181</accession>
<accession>O70335</accession>
<accession>Q8JZY6</accession>
<organism>
    <name type="scientific">Mus musculus</name>
    <name type="common">Mouse</name>
    <dbReference type="NCBI Taxonomy" id="10090"/>
    <lineage>
        <taxon>Eukaryota</taxon>
        <taxon>Metazoa</taxon>
        <taxon>Chordata</taxon>
        <taxon>Craniata</taxon>
        <taxon>Vertebrata</taxon>
        <taxon>Euteleostomi</taxon>
        <taxon>Mammalia</taxon>
        <taxon>Eutheria</taxon>
        <taxon>Euarchontoglires</taxon>
        <taxon>Glires</taxon>
        <taxon>Rodentia</taxon>
        <taxon>Myomorpha</taxon>
        <taxon>Muroidea</taxon>
        <taxon>Muridae</taxon>
        <taxon>Murinae</taxon>
        <taxon>Mus</taxon>
        <taxon>Mus</taxon>
    </lineage>
</organism>
<gene>
    <name evidence="23" type="primary">Pip5k1b</name>
</gene>
<comment type="function">
    <text evidence="2 5 7 9 10 11 12 13">Catalyzes the phosphorylation of phosphatidylinositol 4-phosphate (PtdIns(4)P/PI4P) to form phosphatidylinositol 4,5-bisphosphate (PtdIns(4,5)P2/PIP2), a lipid second messenger that regulates several cellular processes such as signal transduction, vesicle trafficking, actin cytoskeleton dynamics, cell adhesion, and cell motility (PubMed:22942276, PubMed:8798574, PubMed:9367159, PubMed:9535851). PtdIns(4,5)P2 can directly act as a second messenger or can be utilized as a precursor to generate other second messengers: inositol 1,4,5-trisphosphate (IP3), diacylglycerol (DAG) or phosphatidylinositol-3,4,5-trisphosphate (PtdIns(3,4,5)P3/PIP3) (By similarity). Mediates RAC1-dependent reorganization of actin filaments (PubMed:10679324). Contributes to the activation of phospholipase PLD2 (PubMed:11032811). Together with PIP5K1A, is required, after stimulation by G-protein coupled receptors, for the synthesis of IP3 that will induce stable platelet adhesion (PubMed:18772378).</text>
</comment>
<comment type="catalytic activity">
    <reaction evidence="10 11 12 13">
        <text>a 1,2-diacyl-sn-glycero-3-phospho-(1D-myo-inositol 4-phosphate) + ATP = a 1,2-diacyl-sn-glycero-3-phospho-(1D-myo-inositol-4,5-bisphosphate) + ADP + H(+)</text>
        <dbReference type="Rhea" id="RHEA:14425"/>
        <dbReference type="ChEBI" id="CHEBI:15378"/>
        <dbReference type="ChEBI" id="CHEBI:30616"/>
        <dbReference type="ChEBI" id="CHEBI:58178"/>
        <dbReference type="ChEBI" id="CHEBI:58456"/>
        <dbReference type="ChEBI" id="CHEBI:456216"/>
        <dbReference type="EC" id="2.7.1.68"/>
    </reaction>
    <physiologicalReaction direction="left-to-right" evidence="18 19 20 21">
        <dbReference type="Rhea" id="RHEA:14426"/>
    </physiologicalReaction>
</comment>
<comment type="catalytic activity">
    <reaction evidence="10">
        <text>1-octadecanoyl-2-(5Z,8Z,11Z,14Z)-eicosatetraenoyl-sn-glycero-3-phospho-1D-myo-inositol 4-phosphate + ATP = 1-octadecanoyl-2-(5Z,8Z,11Z,14Z)-eicosatetraenoyl-sn-glycero-3-phospho-1D-myo-inositol 4,5-bisphosphate + ADP + H(+)</text>
        <dbReference type="Rhea" id="RHEA:40363"/>
        <dbReference type="ChEBI" id="CHEBI:15378"/>
        <dbReference type="ChEBI" id="CHEBI:30616"/>
        <dbReference type="ChEBI" id="CHEBI:77136"/>
        <dbReference type="ChEBI" id="CHEBI:77137"/>
        <dbReference type="ChEBI" id="CHEBI:456216"/>
    </reaction>
    <physiologicalReaction direction="left-to-right" evidence="18">
        <dbReference type="Rhea" id="RHEA:40364"/>
    </physiologicalReaction>
</comment>
<comment type="catalytic activity">
    <reaction evidence="10">
        <text>1-octadecanoyl-2-(9Z)-octadecenoyl-sn-glycero-3-phospho-1D-myo-inositol 4-phosphate + ATP = 1-octadecanoyl-2-(9Z)-octadecenoyl-sn-glycero-3-phospho-1D-myo-inositol 4,5-bisphosphate + ADP + H(+)</text>
        <dbReference type="Rhea" id="RHEA:40367"/>
        <dbReference type="ChEBI" id="CHEBI:15378"/>
        <dbReference type="ChEBI" id="CHEBI:30616"/>
        <dbReference type="ChEBI" id="CHEBI:77139"/>
        <dbReference type="ChEBI" id="CHEBI:77140"/>
        <dbReference type="ChEBI" id="CHEBI:456216"/>
    </reaction>
    <physiologicalReaction direction="left-to-right" evidence="18">
        <dbReference type="Rhea" id="RHEA:40368"/>
    </physiologicalReaction>
</comment>
<comment type="catalytic activity">
    <reaction evidence="10">
        <text>1-octadecanoyl-2-(9Z)-octadecenoyl-sn-glycero-3-phospho-1D-myo-inositol + ATP = 1-octadecanoyl-2-(9Z)-octadecenoyl-sn-glycero-3-phospho-1D-myo-inositol 5-phosphate + ADP + H(+)</text>
        <dbReference type="Rhea" id="RHEA:40379"/>
        <dbReference type="ChEBI" id="CHEBI:15378"/>
        <dbReference type="ChEBI" id="CHEBI:30616"/>
        <dbReference type="ChEBI" id="CHEBI:77163"/>
        <dbReference type="ChEBI" id="CHEBI:77164"/>
        <dbReference type="ChEBI" id="CHEBI:456216"/>
    </reaction>
    <physiologicalReaction direction="left-to-right" evidence="18">
        <dbReference type="Rhea" id="RHEA:40380"/>
    </physiologicalReaction>
</comment>
<comment type="catalytic activity">
    <reaction evidence="10">
        <text>1-octadecanoyl-2-(9Z,12Z)-octadecadienoyl-sn-glycero-3-phospho-1D-myo-inositol + ATP = 1-octadecanoyl-2-(9Z,12Z)-octadecadienoyl-sn-glycero-3-phospho-1D-myo-inositol 5-phosphate + ADP + H(+)</text>
        <dbReference type="Rhea" id="RHEA:40383"/>
        <dbReference type="ChEBI" id="CHEBI:15378"/>
        <dbReference type="ChEBI" id="CHEBI:30616"/>
        <dbReference type="ChEBI" id="CHEBI:77158"/>
        <dbReference type="ChEBI" id="CHEBI:77159"/>
        <dbReference type="ChEBI" id="CHEBI:456216"/>
    </reaction>
    <physiologicalReaction direction="left-to-right" evidence="18">
        <dbReference type="Rhea" id="RHEA:40384"/>
    </physiologicalReaction>
</comment>
<comment type="catalytic activity">
    <reaction evidence="10">
        <text>1-octadecanoyl-2-(5Z,8Z,11Z,14Z-eicosatetraenoyl)-sn-glycero-3-phospho-(1D-myo-inositol) + ATP = 1-octadecanoyl-2-(5Z,8Z,11Z,14Z)-eicosatetraenoyl-sn-glycero-3-phospho-1D-myo-inositol 5-phosphate + ADP + H(+)</text>
        <dbReference type="Rhea" id="RHEA:40375"/>
        <dbReference type="ChEBI" id="CHEBI:15378"/>
        <dbReference type="ChEBI" id="CHEBI:30616"/>
        <dbReference type="ChEBI" id="CHEBI:77160"/>
        <dbReference type="ChEBI" id="CHEBI:133606"/>
        <dbReference type="ChEBI" id="CHEBI:456216"/>
    </reaction>
    <physiologicalReaction direction="left-to-right" evidence="18">
        <dbReference type="Rhea" id="RHEA:40376"/>
    </physiologicalReaction>
</comment>
<comment type="catalytic activity">
    <reaction evidence="10">
        <text>1,2-di-(9Z,12Z)-octadecadienoyl-sn-glycero-3-phospho-1D-myo-inositol + ATP = 1,2-di(9Z,12Z)-octadecadienoyl-sn-glycero-3-phospho-1D-myo-inositol 5-phosphate + ADP + H(+)</text>
        <dbReference type="Rhea" id="RHEA:40387"/>
        <dbReference type="ChEBI" id="CHEBI:15378"/>
        <dbReference type="ChEBI" id="CHEBI:30616"/>
        <dbReference type="ChEBI" id="CHEBI:77165"/>
        <dbReference type="ChEBI" id="CHEBI:77167"/>
        <dbReference type="ChEBI" id="CHEBI:456216"/>
    </reaction>
    <physiologicalReaction direction="left-to-right" evidence="18">
        <dbReference type="Rhea" id="RHEA:40388"/>
    </physiologicalReaction>
</comment>
<comment type="activity regulation">
    <text evidence="11 13">Activated by phosphatidic acid.</text>
</comment>
<comment type="biophysicochemical properties">
    <kinetics>
        <KM evidence="13">34 uM for phosphatidylinositol-4-phosphate/PtdIns(4)P</KM>
        <KM evidence="13">27 uM for ATP</KM>
        <KM evidence="10">3.7 uM for 1-octadecanoyl-2-(5Z,8Z,11Z,14Z)-eicosatetraenoyl-sn-glycero-3-phospho-1D-myo-inositol 4-phosphate</KM>
        <KM evidence="10">4.9 uM for 1-octadecanoyl-2-(9Z)-octadecenoyl-sn-glycero-3-phospho-1D-myo-inositol 4-phosphate</KM>
    </kinetics>
</comment>
<comment type="subunit">
    <text evidence="5 6 7 8">Interacts with RAC1, AJUBA, PLD1, PLD2 and ARF1.</text>
</comment>
<comment type="interaction">
    <interactant intactId="EBI-645167">
        <id>P70181</id>
    </interactant>
    <interactant intactId="EBI-645175">
        <id>Q9QYB1</id>
        <label>Clic4</label>
    </interactant>
    <organismsDiffer>false</organismsDiffer>
    <experiments>4</experiments>
</comment>
<comment type="subcellular location">
    <subcellularLocation>
        <location evidence="7">Cytoplasm</location>
        <location evidence="7">Cytosol</location>
    </subcellularLocation>
    <subcellularLocation>
        <location evidence="7">Cell membrane</location>
    </subcellularLocation>
    <subcellularLocation>
        <location evidence="1">Endomembrane system</location>
    </subcellularLocation>
    <text evidence="1">Associated with membranes.</text>
</comment>
<comment type="alternative products">
    <event type="alternative splicing"/>
    <isoform>
        <id>P70181-1</id>
        <name>1</name>
        <sequence type="displayed"/>
    </isoform>
    <isoform>
        <id>P70181-2</id>
        <name>2</name>
        <sequence type="described" ref="VSP_016012"/>
    </isoform>
</comment>
<comment type="tissue specificity">
    <text evidence="11">Highly expressed in brain and testis. Barely detectable in liver and skeletal muscle.</text>
</comment>
<comment type="caution">
    <text evidence="16">There is confusion in the literature with phosphatidylinositol 4-phosphate 5-kinase type I nomenclature due to the fact that frequently mouse PIP5K1B is named Phosphatidylinositol 4-phosphate 5-kinase type I alpha.</text>
</comment>
<keyword id="KW-0025">Alternative splicing</keyword>
<keyword id="KW-0067">ATP-binding</keyword>
<keyword id="KW-1003">Cell membrane</keyword>
<keyword id="KW-0963">Cytoplasm</keyword>
<keyword id="KW-0418">Kinase</keyword>
<keyword id="KW-0443">Lipid metabolism</keyword>
<keyword id="KW-0472">Membrane</keyword>
<keyword id="KW-0547">Nucleotide-binding</keyword>
<keyword id="KW-0597">Phosphoprotein</keyword>
<keyword id="KW-1185">Reference proteome</keyword>
<keyword id="KW-0808">Transferase</keyword>
<feature type="chain" id="PRO_0000185459" description="Phosphatidylinositol 4-phosphate 5-kinase type-1 beta">
    <location>
        <begin position="1"/>
        <end position="539"/>
    </location>
</feature>
<feature type="domain" description="PIPK" evidence="3">
    <location>
        <begin position="25"/>
        <end position="395"/>
    </location>
</feature>
<feature type="region of interest" description="Disordered" evidence="4">
    <location>
        <begin position="1"/>
        <end position="21"/>
    </location>
</feature>
<feature type="modified residue" description="Phosphoserine" evidence="24">
    <location>
        <position position="445"/>
    </location>
</feature>
<feature type="modified residue" description="Phosphoserine" evidence="24">
    <location>
        <position position="447"/>
    </location>
</feature>
<feature type="modified residue" description="Phosphoserine" evidence="24">
    <location>
        <position position="448"/>
    </location>
</feature>
<feature type="splice variant" id="VSP_016012" description="In isoform 2." evidence="14">
    <location>
        <begin position="401"/>
        <end position="452"/>
    </location>
</feature>
<feature type="mutagenesis site" description="Almost complete loss of 1-phosphatidylinositol-4-phosphate 5-kinase activity." evidence="13">
    <original>K</original>
    <variation>A</variation>
    <location>
        <position position="138"/>
    </location>
</feature>
<feature type="mutagenesis site" description="Reduced 1-phosphatidylinositol-4-phosphate 5-kinase activity by 98%. Loss of actin-remodeling activity." evidence="5">
    <original>D</original>
    <variation>A</variation>
    <location>
        <position position="227"/>
    </location>
</feature>
<feature type="sequence conflict" description="In Ref. 2; AAC05374." evidence="16" ref="2">
    <original>V</original>
    <variation>A</variation>
    <location>
        <position position="291"/>
    </location>
</feature>
<feature type="sequence conflict" description="In Ref. 2; AAC05374." evidence="16" ref="2">
    <original>V</original>
    <variation>L</variation>
    <location>
        <position position="425"/>
    </location>
</feature>
<feature type="sequence conflict" description="In Ref. 2; AAC05374." evidence="16" ref="2">
    <original>R</original>
    <variation>Q</variation>
    <location>
        <position position="437"/>
    </location>
</feature>
<feature type="sequence conflict" description="In Ref. 2; AAC05374." evidence="16" ref="2">
    <original>TLDL</original>
    <variation>ALET</variation>
    <location>
        <begin position="525"/>
        <end position="528"/>
    </location>
</feature>
<name>PI51B_MOUSE</name>
<protein>
    <recommendedName>
        <fullName evidence="17">Phosphatidylinositol 4-phosphate 5-kinase type-1 beta</fullName>
        <shortName evidence="17">PIP5KI-beta</shortName>
        <shortName evidence="17">PtdIns(4)P-5-kinase 1 beta</shortName>
        <ecNumber evidence="10 11 12 13">2.7.1.68</ecNumber>
    </recommendedName>
    <alternativeName>
        <fullName evidence="15">68 kDa type I phosphatidylinositol 4-phosphate 5-kinase beta</fullName>
    </alternativeName>
    <alternativeName>
        <fullName evidence="22">Phosphatidylinositol 4-phosphate 5-kinase type I alpha</fullName>
        <shortName>PIP5KIalpha</shortName>
    </alternativeName>
    <alternativeName>
        <fullName evidence="17">Phosphatidylinositol 4-phosphate 5-kinase type I beta</fullName>
        <shortName evidence="17">PIP5KIbeta</shortName>
    </alternativeName>
</protein>
<sequence length="539" mass="60803">MSSTAENGDAVPGKQNEEKTYKKTASSAIKGAIQLGIGYTVGNLTSKPERDVLMQDFYVVESVFLPSEGSNLTPAHHYPDFRFKTYAPLAFRYFRELFGIKPDDYLYSICSEPLIELSNPGASGSLFFLTSDDEFIIKTVQHKEAEFLQKLLPGYYMNLNQNPRTLLPKFYGLYCMQSGGINIRIVVMNNVLPRAMRMHLTYDLKGSTYKRRASRKEREKPNPTFKDLDFLQDMHEGLYFDTETYNALMKTLQRDCRVLESFKIMDYSLLLGIHILDHSLKDKEEEPLQNVPDAKRPGMQKVLYSTAMESIQGPGKSADGIIAENPDTMGGIPAKSHKGEKLLLFMGIIDILQSYRLMKKLEHSWKALVYDGDTVSVHRPSFYADRFLKFMNSRVFKKIQALKASPSKKRCNSIAALKATSQEIVSSISQEWKDEKRDLLTEGQSFSSLDEEALGSRHRPDLVPSTPSLFEAASLATTISSSSLYVGEHYPHDRTTLYSNSKGLPSSSTFTLEEGTIYLTAEPNTLDLQDDASVLDVYL</sequence>
<evidence type="ECO:0000250" key="1"/>
<evidence type="ECO:0000250" key="2">
    <source>
        <dbReference type="UniProtKB" id="Q99755"/>
    </source>
</evidence>
<evidence type="ECO:0000255" key="3">
    <source>
        <dbReference type="PROSITE-ProRule" id="PRU00781"/>
    </source>
</evidence>
<evidence type="ECO:0000256" key="4">
    <source>
        <dbReference type="SAM" id="MobiDB-lite"/>
    </source>
</evidence>
<evidence type="ECO:0000269" key="5">
    <source>
    </source>
</evidence>
<evidence type="ECO:0000269" key="6">
    <source>
    </source>
</evidence>
<evidence type="ECO:0000269" key="7">
    <source>
    </source>
</evidence>
<evidence type="ECO:0000269" key="8">
    <source>
    </source>
</evidence>
<evidence type="ECO:0000269" key="9">
    <source>
    </source>
</evidence>
<evidence type="ECO:0000269" key="10">
    <source>
    </source>
</evidence>
<evidence type="ECO:0000269" key="11">
    <source>
    </source>
</evidence>
<evidence type="ECO:0000269" key="12">
    <source>
    </source>
</evidence>
<evidence type="ECO:0000269" key="13">
    <source>
    </source>
</evidence>
<evidence type="ECO:0000303" key="14">
    <source>
    </source>
</evidence>
<evidence type="ECO:0000303" key="15">
    <source>
    </source>
</evidence>
<evidence type="ECO:0000305" key="16"/>
<evidence type="ECO:0000305" key="17">
    <source>
    </source>
</evidence>
<evidence type="ECO:0000305" key="18">
    <source>
    </source>
</evidence>
<evidence type="ECO:0000305" key="19">
    <source>
    </source>
</evidence>
<evidence type="ECO:0000305" key="20">
    <source>
    </source>
</evidence>
<evidence type="ECO:0000305" key="21">
    <source>
    </source>
</evidence>
<evidence type="ECO:0000312" key="22">
    <source>
        <dbReference type="EMBL" id="BAA13030.1"/>
    </source>
</evidence>
<evidence type="ECO:0000312" key="23">
    <source>
        <dbReference type="MGI" id="MGI:107930"/>
    </source>
</evidence>
<evidence type="ECO:0007744" key="24">
    <source>
    </source>
</evidence>
<proteinExistence type="evidence at protein level"/>